<feature type="chain" id="PRO_0000382507" description="Probable cytosolic iron-sulfur protein assembly protein 1">
    <location>
        <begin position="1"/>
        <end position="436"/>
    </location>
</feature>
<feature type="repeat" description="WD 1">
    <location>
        <begin position="10"/>
        <end position="52"/>
    </location>
</feature>
<feature type="repeat" description="WD 2">
    <location>
        <begin position="56"/>
        <end position="100"/>
    </location>
</feature>
<feature type="repeat" description="WD 3">
    <location>
        <begin position="147"/>
        <end position="186"/>
    </location>
</feature>
<feature type="repeat" description="WD 4">
    <location>
        <begin position="195"/>
        <end position="237"/>
    </location>
</feature>
<feature type="repeat" description="WD 5">
    <location>
        <begin position="243"/>
        <end position="297"/>
    </location>
</feature>
<feature type="repeat" description="WD 6">
    <location>
        <begin position="328"/>
        <end position="367"/>
    </location>
</feature>
<feature type="repeat" description="WD 7">
    <location>
        <begin position="389"/>
        <end position="433"/>
    </location>
</feature>
<feature type="region of interest" description="Disordered" evidence="2">
    <location>
        <begin position="94"/>
        <end position="113"/>
    </location>
</feature>
<feature type="region of interest" description="Disordered" evidence="2">
    <location>
        <begin position="118"/>
        <end position="137"/>
    </location>
</feature>
<feature type="region of interest" description="Disordered" evidence="2">
    <location>
        <begin position="295"/>
        <end position="316"/>
    </location>
</feature>
<feature type="compositionally biased region" description="Gly residues" evidence="2">
    <location>
        <begin position="98"/>
        <end position="107"/>
    </location>
</feature>
<accession>A6RT32</accession>
<accession>A0A384JGF6</accession>
<organism>
    <name type="scientific">Botryotinia fuckeliana (strain B05.10)</name>
    <name type="common">Noble rot fungus</name>
    <name type="synonym">Botrytis cinerea</name>
    <dbReference type="NCBI Taxonomy" id="332648"/>
    <lineage>
        <taxon>Eukaryota</taxon>
        <taxon>Fungi</taxon>
        <taxon>Dikarya</taxon>
        <taxon>Ascomycota</taxon>
        <taxon>Pezizomycotina</taxon>
        <taxon>Leotiomycetes</taxon>
        <taxon>Helotiales</taxon>
        <taxon>Sclerotiniaceae</taxon>
        <taxon>Botrytis</taxon>
    </lineage>
</organism>
<dbReference type="EMBL" id="CP009808">
    <property type="protein sequence ID" value="ATZ49384.1"/>
    <property type="molecule type" value="Genomic_DNA"/>
</dbReference>
<dbReference type="SMR" id="A6RT32"/>
<dbReference type="EnsemblFungi" id="Bcin04g05390.1">
    <property type="protein sequence ID" value="Bcin04p05390.1"/>
    <property type="gene ID" value="Bcin04g05390"/>
</dbReference>
<dbReference type="GeneID" id="5438283"/>
<dbReference type="KEGG" id="bfu:BCIN_04g05390"/>
<dbReference type="VEuPathDB" id="FungiDB:Bcin04g05390"/>
<dbReference type="OMA" id="IREIRWS"/>
<dbReference type="OrthoDB" id="284782at2759"/>
<dbReference type="Proteomes" id="UP000001798">
    <property type="component" value="Chromosome bcin04"/>
</dbReference>
<dbReference type="GO" id="GO:0097361">
    <property type="term" value="C:cytosolic [4Fe-4S] assembly targeting complex"/>
    <property type="evidence" value="ECO:0007669"/>
    <property type="project" value="InterPro"/>
</dbReference>
<dbReference type="GO" id="GO:0016226">
    <property type="term" value="P:iron-sulfur cluster assembly"/>
    <property type="evidence" value="ECO:0007669"/>
    <property type="project" value="UniProtKB-UniRule"/>
</dbReference>
<dbReference type="Gene3D" id="2.130.10.10">
    <property type="entry name" value="YVTN repeat-like/Quinoprotein amine dehydrogenase"/>
    <property type="match status" value="1"/>
</dbReference>
<dbReference type="HAMAP" id="MF_03037">
    <property type="entry name" value="ciao1"/>
    <property type="match status" value="1"/>
</dbReference>
<dbReference type="InterPro" id="IPR028608">
    <property type="entry name" value="CIAO1/Cia1"/>
</dbReference>
<dbReference type="InterPro" id="IPR015943">
    <property type="entry name" value="WD40/YVTN_repeat-like_dom_sf"/>
</dbReference>
<dbReference type="InterPro" id="IPR036322">
    <property type="entry name" value="WD40_repeat_dom_sf"/>
</dbReference>
<dbReference type="InterPro" id="IPR001680">
    <property type="entry name" value="WD40_rpt"/>
</dbReference>
<dbReference type="PANTHER" id="PTHR19920:SF0">
    <property type="entry name" value="CYTOSOLIC IRON-SULFUR PROTEIN ASSEMBLY PROTEIN CIAO1-RELATED"/>
    <property type="match status" value="1"/>
</dbReference>
<dbReference type="PANTHER" id="PTHR19920">
    <property type="entry name" value="WD40 PROTEIN CIAO1"/>
    <property type="match status" value="1"/>
</dbReference>
<dbReference type="Pfam" id="PF00400">
    <property type="entry name" value="WD40"/>
    <property type="match status" value="5"/>
</dbReference>
<dbReference type="SMART" id="SM00320">
    <property type="entry name" value="WD40"/>
    <property type="match status" value="7"/>
</dbReference>
<dbReference type="SUPFAM" id="SSF50978">
    <property type="entry name" value="WD40 repeat-like"/>
    <property type="match status" value="1"/>
</dbReference>
<dbReference type="PROSITE" id="PS50082">
    <property type="entry name" value="WD_REPEATS_2"/>
    <property type="match status" value="1"/>
</dbReference>
<dbReference type="PROSITE" id="PS50294">
    <property type="entry name" value="WD_REPEATS_REGION"/>
    <property type="match status" value="2"/>
</dbReference>
<comment type="function">
    <text evidence="1">Essential component of the cytosolic iron-sulfur (Fe/S) protein assembly machinery. Required for the maturation of extramitochondrial Fe/S proteins.</text>
</comment>
<comment type="similarity">
    <text evidence="1">Belongs to the WD repeat CIA1 family.</text>
</comment>
<reference key="1">
    <citation type="journal article" date="2011" name="PLoS Genet.">
        <title>Genomic analysis of the necrotrophic fungal pathogens Sclerotinia sclerotiorum and Botrytis cinerea.</title>
        <authorList>
            <person name="Amselem J."/>
            <person name="Cuomo C.A."/>
            <person name="van Kan J.A.L."/>
            <person name="Viaud M."/>
            <person name="Benito E.P."/>
            <person name="Couloux A."/>
            <person name="Coutinho P.M."/>
            <person name="de Vries R.P."/>
            <person name="Dyer P.S."/>
            <person name="Fillinger S."/>
            <person name="Fournier E."/>
            <person name="Gout L."/>
            <person name="Hahn M."/>
            <person name="Kohn L."/>
            <person name="Lapalu N."/>
            <person name="Plummer K.M."/>
            <person name="Pradier J.-M."/>
            <person name="Quevillon E."/>
            <person name="Sharon A."/>
            <person name="Simon A."/>
            <person name="ten Have A."/>
            <person name="Tudzynski B."/>
            <person name="Tudzynski P."/>
            <person name="Wincker P."/>
            <person name="Andrew M."/>
            <person name="Anthouard V."/>
            <person name="Beever R.E."/>
            <person name="Beffa R."/>
            <person name="Benoit I."/>
            <person name="Bouzid O."/>
            <person name="Brault B."/>
            <person name="Chen Z."/>
            <person name="Choquer M."/>
            <person name="Collemare J."/>
            <person name="Cotton P."/>
            <person name="Danchin E.G."/>
            <person name="Da Silva C."/>
            <person name="Gautier A."/>
            <person name="Giraud C."/>
            <person name="Giraud T."/>
            <person name="Gonzalez C."/>
            <person name="Grossetete S."/>
            <person name="Gueldener U."/>
            <person name="Henrissat B."/>
            <person name="Howlett B.J."/>
            <person name="Kodira C."/>
            <person name="Kretschmer M."/>
            <person name="Lappartient A."/>
            <person name="Leroch M."/>
            <person name="Levis C."/>
            <person name="Mauceli E."/>
            <person name="Neuveglise C."/>
            <person name="Oeser B."/>
            <person name="Pearson M."/>
            <person name="Poulain J."/>
            <person name="Poussereau N."/>
            <person name="Quesneville H."/>
            <person name="Rascle C."/>
            <person name="Schumacher J."/>
            <person name="Segurens B."/>
            <person name="Sexton A."/>
            <person name="Silva E."/>
            <person name="Sirven C."/>
            <person name="Soanes D.M."/>
            <person name="Talbot N.J."/>
            <person name="Templeton M."/>
            <person name="Yandava C."/>
            <person name="Yarden O."/>
            <person name="Zeng Q."/>
            <person name="Rollins J.A."/>
            <person name="Lebrun M.-H."/>
            <person name="Dickman M."/>
        </authorList>
    </citation>
    <scope>NUCLEOTIDE SEQUENCE [LARGE SCALE GENOMIC DNA]</scope>
    <source>
        <strain>B05.10</strain>
    </source>
</reference>
<reference key="2">
    <citation type="journal article" date="2012" name="Eukaryot. Cell">
        <title>Genome update of Botrytis cinerea strains B05.10 and T4.</title>
        <authorList>
            <person name="Staats M."/>
            <person name="van Kan J.A.L."/>
        </authorList>
    </citation>
    <scope>NUCLEOTIDE SEQUENCE [LARGE SCALE GENOMIC DNA]</scope>
    <scope>GENOME REANNOTATION</scope>
    <source>
        <strain>B05.10</strain>
    </source>
</reference>
<reference key="3">
    <citation type="journal article" date="2017" name="Mol. Plant Pathol.">
        <title>A gapless genome sequence of the fungus Botrytis cinerea.</title>
        <authorList>
            <person name="van Kan J.A.L."/>
            <person name="Stassen J.H.M."/>
            <person name="Mosbach A."/>
            <person name="van der Lee T.A.J."/>
            <person name="Faino L."/>
            <person name="Farmer A.D."/>
            <person name="Papasotiriou D.G."/>
            <person name="Zhou S."/>
            <person name="Seidl M.F."/>
            <person name="Cottam E."/>
            <person name="Edel D."/>
            <person name="Hahn M."/>
            <person name="Schwartz D.C."/>
            <person name="Dietrich R.A."/>
            <person name="Widdison S."/>
            <person name="Scalliet G."/>
        </authorList>
    </citation>
    <scope>NUCLEOTIDE SEQUENCE [LARGE SCALE GENOMIC DNA]</scope>
    <scope>GENOME REANNOTATION</scope>
    <source>
        <strain>B05.10</strain>
    </source>
</reference>
<keyword id="KW-1185">Reference proteome</keyword>
<keyword id="KW-0677">Repeat</keyword>
<keyword id="KW-0853">WD repeat</keyword>
<protein>
    <recommendedName>
        <fullName evidence="1">Probable cytosolic iron-sulfur protein assembly protein 1</fullName>
    </recommendedName>
</protein>
<gene>
    <name type="primary">cia1</name>
    <name type="ORF">BC1G_03768</name>
    <name type="ORF">BCIN_04g05390</name>
</gene>
<evidence type="ECO:0000255" key="1">
    <source>
        <dbReference type="HAMAP-Rule" id="MF_03037"/>
    </source>
</evidence>
<evidence type="ECO:0000256" key="2">
    <source>
        <dbReference type="SAM" id="MobiDB-lite"/>
    </source>
</evidence>
<proteinExistence type="inferred from homology"/>
<sequence>MRLQHLADFKPQAATRAWASIPNPNGLPLIATATSDKSVRVYSLNNFTLHSTLEGGHERSVRSAAWKPGVRTDGALTIATGSFDATMGIWRRKEDAGNGNGNDGGDGPLEMEIGADGEVSKGAQLRRGGEEDEDEGDDWEFSIVLEGHDSEIKNVAYSPSGQWLASCSRDKTIWIWEEIGEEGEDEFETVAVLQDHKADVKCVCWRKDDGNGEVLASGSYDDTILLSREDGEGDWETVATLEGHEGTVWNLDWEPEVSMKTESSDESSAPATPRLLSSSADMSIRIWSKVPTPPPQNKPSYFNPGIPSTMRPGPENETWECTATLPKVHDLPIYSISWSKQTGRVVSTGGDGKIAIYEEQTKGRNSVGGTIEKEWVVLTVLEGAHGPYEINHVTWCQRFDNGKKTPDEEMVITTGDDGLTKAWCIEENVEERTLEA</sequence>
<name>CIAO1_BOTFB</name>